<keyword id="KW-0010">Activator</keyword>
<keyword id="KW-0217">Developmental protein</keyword>
<keyword id="KW-0221">Differentiation</keyword>
<keyword id="KW-0238">DNA-binding</keyword>
<keyword id="KW-0517">Myogenesis</keyword>
<keyword id="KW-0539">Nucleus</keyword>
<keyword id="KW-1185">Reference proteome</keyword>
<keyword id="KW-0804">Transcription</keyword>
<keyword id="KW-0805">Transcription regulation</keyword>
<reference key="1">
    <citation type="journal article" date="1989" name="Genes Dev.">
        <title>An avian muscle factor related to MyoD1 activates muscle-specific promoters in nonmuscle cells of different germ-layer origin and in BrdU-treated myoblasts.</title>
        <authorList>
            <person name="Lin Z.Y."/>
            <person name="Dechesne C.A."/>
            <person name="Eldridge J."/>
            <person name="Paterson B.M."/>
        </authorList>
    </citation>
    <scope>NUCLEOTIDE SEQUENCE [MRNA]</scope>
</reference>
<reference key="2">
    <citation type="journal article" date="1994" name="Mol. Cell. Biol.">
        <title>E-box- and MEF-2-independent muscle-specific expression, positive autoregulation, and cross-activation of the chicken MyoD (CMD1) promoter reveal an indirect regulatory pathway.</title>
        <authorList>
            <person name="Dechesne C.A."/>
            <person name="Wei Q."/>
            <person name="Eldridge J."/>
            <person name="Gannoun-Zaki L."/>
            <person name="Millasseau P."/>
            <person name="Bougueleret L."/>
            <person name="Caterina D."/>
            <person name="Paterson B.M."/>
        </authorList>
    </citation>
    <scope>NUCLEOTIDE SEQUENCE [GENOMIC DNA]</scope>
    <source>
        <strain>SPAFAS</strain>
        <tissue>Skeletal muscle</tissue>
    </source>
</reference>
<name>MYOD1_CHICK</name>
<comment type="function">
    <text evidence="1">Acts as a transcriptional activator that promotes transcription of muscle-specific target genes and plays a role in muscle differentiation. Induces fibroblasts to differentiate into myoblasts. Interacts with and is inhibited by the twist protein. This interaction probably involves the basic domains of both proteins (By similarity).</text>
</comment>
<comment type="subunit">
    <text>Efficient DNA binding requires dimerization with another bHLH protein. Seems to form active heterodimers with ITF-2.</text>
</comment>
<comment type="subcellular location">
    <subcellularLocation>
        <location>Nucleus</location>
    </subcellularLocation>
</comment>
<organism>
    <name type="scientific">Gallus gallus</name>
    <name type="common">Chicken</name>
    <dbReference type="NCBI Taxonomy" id="9031"/>
    <lineage>
        <taxon>Eukaryota</taxon>
        <taxon>Metazoa</taxon>
        <taxon>Chordata</taxon>
        <taxon>Craniata</taxon>
        <taxon>Vertebrata</taxon>
        <taxon>Euteleostomi</taxon>
        <taxon>Archelosauria</taxon>
        <taxon>Archosauria</taxon>
        <taxon>Dinosauria</taxon>
        <taxon>Saurischia</taxon>
        <taxon>Theropoda</taxon>
        <taxon>Coelurosauria</taxon>
        <taxon>Aves</taxon>
        <taxon>Neognathae</taxon>
        <taxon>Galloanserae</taxon>
        <taxon>Galliformes</taxon>
        <taxon>Phasianidae</taxon>
        <taxon>Phasianinae</taxon>
        <taxon>Gallus</taxon>
    </lineage>
</organism>
<protein>
    <recommendedName>
        <fullName>Myoblast determination protein 1 homolog</fullName>
        <shortName>MYOD1 homolog</shortName>
    </recommendedName>
</protein>
<proteinExistence type="evidence at transcript level"/>
<accession>P16075</accession>
<accession>Q90916</accession>
<evidence type="ECO:0000250" key="1"/>
<evidence type="ECO:0000255" key="2">
    <source>
        <dbReference type="PROSITE-ProRule" id="PRU00981"/>
    </source>
</evidence>
<evidence type="ECO:0000256" key="3">
    <source>
        <dbReference type="SAM" id="MobiDB-lite"/>
    </source>
</evidence>
<evidence type="ECO:0000305" key="4"/>
<gene>
    <name type="primary">MYOD1</name>
    <name type="synonym">CMD1</name>
    <name type="synonym">MYOD</name>
</gene>
<sequence>MDLLGPMEMTEGSLCSFTAADDFYDDPCFNTSDMHFFEDLDPRLVHVGGLLKPEEHPHTRAPPREPTEEEHVRAPSGHHQAGRCLLWACKACKRKTTNADRRKAATMRERRRLSKVNEAFETLKRCTSTNPNQRLPKVEILRNAIRYIESLQALLREQEDAYYPVLEHYSGESDASSPRSNCSDGMMEYSGPPCSSRRRNSYDSSYYTESPNDPKHGKSSVVSSLDCLSSIVERISTDNSTCPILPPAEAVAEGSPCSPQEGGNLSDSGAQIPSPTNCTPLPQESSSSSSSNPIYQVL</sequence>
<dbReference type="EMBL" id="X16189">
    <property type="protein sequence ID" value="CAA34315.1"/>
    <property type="molecule type" value="mRNA"/>
</dbReference>
<dbReference type="EMBL" id="L34006">
    <property type="protein sequence ID" value="AAA74374.1"/>
    <property type="molecule type" value="Genomic_DNA"/>
</dbReference>
<dbReference type="PIR" id="A32872">
    <property type="entry name" value="A32872"/>
</dbReference>
<dbReference type="RefSeq" id="NP_989545.2">
    <property type="nucleotide sequence ID" value="NM_204214.2"/>
</dbReference>
<dbReference type="SMR" id="P16075"/>
<dbReference type="STRING" id="9031.ENSGALP00000038684"/>
<dbReference type="PaxDb" id="9031-ENSGALP00000038684"/>
<dbReference type="GeneID" id="374048"/>
<dbReference type="KEGG" id="gga:374048"/>
<dbReference type="CTD" id="4654"/>
<dbReference type="VEuPathDB" id="HostDB:geneid_374048"/>
<dbReference type="eggNOG" id="KOG3960">
    <property type="taxonomic scope" value="Eukaryota"/>
</dbReference>
<dbReference type="InParanoid" id="P16075"/>
<dbReference type="OrthoDB" id="10049614at2759"/>
<dbReference type="PhylomeDB" id="P16075"/>
<dbReference type="PRO" id="PR:P16075"/>
<dbReference type="Proteomes" id="UP000000539">
    <property type="component" value="Unassembled WGS sequence"/>
</dbReference>
<dbReference type="GO" id="GO:0005634">
    <property type="term" value="C:nucleus"/>
    <property type="evidence" value="ECO:0007669"/>
    <property type="project" value="UniProtKB-SubCell"/>
</dbReference>
<dbReference type="GO" id="GO:0005667">
    <property type="term" value="C:transcription regulator complex"/>
    <property type="evidence" value="ECO:0000314"/>
    <property type="project" value="BHF-UCL"/>
</dbReference>
<dbReference type="GO" id="GO:0043425">
    <property type="term" value="F:bHLH transcription factor binding"/>
    <property type="evidence" value="ECO:0000353"/>
    <property type="project" value="BHF-UCL"/>
</dbReference>
<dbReference type="GO" id="GO:0001216">
    <property type="term" value="F:DNA-binding transcription activator activity"/>
    <property type="evidence" value="ECO:0000250"/>
    <property type="project" value="UniProtKB"/>
</dbReference>
<dbReference type="GO" id="GO:0000981">
    <property type="term" value="F:DNA-binding transcription factor activity, RNA polymerase II-specific"/>
    <property type="evidence" value="ECO:0000318"/>
    <property type="project" value="GO_Central"/>
</dbReference>
<dbReference type="GO" id="GO:0070888">
    <property type="term" value="F:E-box binding"/>
    <property type="evidence" value="ECO:0000314"/>
    <property type="project" value="BHF-UCL"/>
</dbReference>
<dbReference type="GO" id="GO:0042802">
    <property type="term" value="F:identical protein binding"/>
    <property type="evidence" value="ECO:0000353"/>
    <property type="project" value="BHF-UCL"/>
</dbReference>
<dbReference type="GO" id="GO:1990841">
    <property type="term" value="F:promoter-specific chromatin binding"/>
    <property type="evidence" value="ECO:0000250"/>
    <property type="project" value="UniProtKB"/>
</dbReference>
<dbReference type="GO" id="GO:0046983">
    <property type="term" value="F:protein dimerization activity"/>
    <property type="evidence" value="ECO:0007669"/>
    <property type="project" value="InterPro"/>
</dbReference>
<dbReference type="GO" id="GO:0000978">
    <property type="term" value="F:RNA polymerase II cis-regulatory region sequence-specific DNA binding"/>
    <property type="evidence" value="ECO:0000318"/>
    <property type="project" value="GO_Central"/>
</dbReference>
<dbReference type="GO" id="GO:0071392">
    <property type="term" value="P:cellular response to estradiol stimulus"/>
    <property type="evidence" value="ECO:0000250"/>
    <property type="project" value="UniProtKB"/>
</dbReference>
<dbReference type="GO" id="GO:0042693">
    <property type="term" value="P:muscle cell fate commitment"/>
    <property type="evidence" value="ECO:0000314"/>
    <property type="project" value="BHF-UCL"/>
</dbReference>
<dbReference type="GO" id="GO:0007517">
    <property type="term" value="P:muscle organ development"/>
    <property type="evidence" value="ECO:0000303"/>
    <property type="project" value="AgBase"/>
</dbReference>
<dbReference type="GO" id="GO:0045663">
    <property type="term" value="P:positive regulation of myoblast differentiation"/>
    <property type="evidence" value="ECO:0000318"/>
    <property type="project" value="GO_Central"/>
</dbReference>
<dbReference type="GO" id="GO:0048743">
    <property type="term" value="P:positive regulation of skeletal muscle fiber development"/>
    <property type="evidence" value="ECO:0000318"/>
    <property type="project" value="GO_Central"/>
</dbReference>
<dbReference type="GO" id="GO:1905382">
    <property type="term" value="P:positive regulation of snRNA transcription by RNA polymerase II"/>
    <property type="evidence" value="ECO:0000250"/>
    <property type="project" value="UniProtKB"/>
</dbReference>
<dbReference type="GO" id="GO:0045944">
    <property type="term" value="P:positive regulation of transcription by RNA polymerase II"/>
    <property type="evidence" value="ECO:0000314"/>
    <property type="project" value="BHF-UCL"/>
</dbReference>
<dbReference type="GO" id="GO:0006357">
    <property type="term" value="P:regulation of transcription by RNA polymerase II"/>
    <property type="evidence" value="ECO:0000318"/>
    <property type="project" value="GO_Central"/>
</dbReference>
<dbReference type="GO" id="GO:0035914">
    <property type="term" value="P:skeletal muscle cell differentiation"/>
    <property type="evidence" value="ECO:0000318"/>
    <property type="project" value="GO_Central"/>
</dbReference>
<dbReference type="CDD" id="cd18936">
    <property type="entry name" value="bHLH_TS_MYOD1_Myf3"/>
    <property type="match status" value="1"/>
</dbReference>
<dbReference type="FunFam" id="4.10.280.10:FF:000005">
    <property type="entry name" value="Myogenic factor"/>
    <property type="match status" value="1"/>
</dbReference>
<dbReference type="Gene3D" id="4.10.280.10">
    <property type="entry name" value="Helix-loop-helix DNA-binding domain"/>
    <property type="match status" value="1"/>
</dbReference>
<dbReference type="InterPro" id="IPR011598">
    <property type="entry name" value="bHLH_dom"/>
</dbReference>
<dbReference type="InterPro" id="IPR036638">
    <property type="entry name" value="HLH_DNA-bd_sf"/>
</dbReference>
<dbReference type="InterPro" id="IPR022032">
    <property type="entry name" value="Myf5"/>
</dbReference>
<dbReference type="InterPro" id="IPR002546">
    <property type="entry name" value="MyoD_N"/>
</dbReference>
<dbReference type="InterPro" id="IPR039704">
    <property type="entry name" value="Myogenic_factor"/>
</dbReference>
<dbReference type="PANTHER" id="PTHR11534:SF2">
    <property type="entry name" value="MYOBLAST DETERMINATION PROTEIN 1"/>
    <property type="match status" value="1"/>
</dbReference>
<dbReference type="PANTHER" id="PTHR11534">
    <property type="entry name" value="MYOGENIC FACTOR"/>
    <property type="match status" value="1"/>
</dbReference>
<dbReference type="Pfam" id="PF01586">
    <property type="entry name" value="Basic"/>
    <property type="match status" value="1"/>
</dbReference>
<dbReference type="Pfam" id="PF00010">
    <property type="entry name" value="HLH"/>
    <property type="match status" value="1"/>
</dbReference>
<dbReference type="Pfam" id="PF12232">
    <property type="entry name" value="Myf5"/>
    <property type="match status" value="1"/>
</dbReference>
<dbReference type="SMART" id="SM00520">
    <property type="entry name" value="BASIC"/>
    <property type="match status" value="1"/>
</dbReference>
<dbReference type="SMART" id="SM00353">
    <property type="entry name" value="HLH"/>
    <property type="match status" value="1"/>
</dbReference>
<dbReference type="SUPFAM" id="SSF47459">
    <property type="entry name" value="HLH, helix-loop-helix DNA-binding domain"/>
    <property type="match status" value="1"/>
</dbReference>
<dbReference type="PROSITE" id="PS50888">
    <property type="entry name" value="BHLH"/>
    <property type="match status" value="1"/>
</dbReference>
<feature type="chain" id="PRO_0000127365" description="Myoblast determination protein 1 homolog">
    <location>
        <begin position="1"/>
        <end position="298"/>
    </location>
</feature>
<feature type="domain" description="bHLH" evidence="2">
    <location>
        <begin position="100"/>
        <end position="151"/>
    </location>
</feature>
<feature type="region of interest" description="Disordered" evidence="3">
    <location>
        <begin position="53"/>
        <end position="77"/>
    </location>
</feature>
<feature type="region of interest" description="Disordered" evidence="3">
    <location>
        <begin position="170"/>
        <end position="220"/>
    </location>
</feature>
<feature type="region of interest" description="Disordered" evidence="3">
    <location>
        <begin position="242"/>
        <end position="298"/>
    </location>
</feature>
<feature type="compositionally biased region" description="Basic and acidic residues" evidence="3">
    <location>
        <begin position="53"/>
        <end position="73"/>
    </location>
</feature>
<feature type="compositionally biased region" description="Polar residues" evidence="3">
    <location>
        <begin position="173"/>
        <end position="183"/>
    </location>
</feature>
<feature type="compositionally biased region" description="Polar residues" evidence="3">
    <location>
        <begin position="257"/>
        <end position="284"/>
    </location>
</feature>
<feature type="sequence conflict" description="In Ref. 1; CAA34315." evidence="4" ref="1">
    <original>P</original>
    <variation>A</variation>
    <location>
        <position position="53"/>
    </location>
</feature>